<reference key="1">
    <citation type="journal article" date="2004" name="Nat. Genet.">
        <title>Complete sequencing and characterization of 21,243 full-length human cDNAs.</title>
        <authorList>
            <person name="Ota T."/>
            <person name="Suzuki Y."/>
            <person name="Nishikawa T."/>
            <person name="Otsuki T."/>
            <person name="Sugiyama T."/>
            <person name="Irie R."/>
            <person name="Wakamatsu A."/>
            <person name="Hayashi K."/>
            <person name="Sato H."/>
            <person name="Nagai K."/>
            <person name="Kimura K."/>
            <person name="Makita H."/>
            <person name="Sekine M."/>
            <person name="Obayashi M."/>
            <person name="Nishi T."/>
            <person name="Shibahara T."/>
            <person name="Tanaka T."/>
            <person name="Ishii S."/>
            <person name="Yamamoto J."/>
            <person name="Saito K."/>
            <person name="Kawai Y."/>
            <person name="Isono Y."/>
            <person name="Nakamura Y."/>
            <person name="Nagahari K."/>
            <person name="Murakami K."/>
            <person name="Yasuda T."/>
            <person name="Iwayanagi T."/>
            <person name="Wagatsuma M."/>
            <person name="Shiratori A."/>
            <person name="Sudo H."/>
            <person name="Hosoiri T."/>
            <person name="Kaku Y."/>
            <person name="Kodaira H."/>
            <person name="Kondo H."/>
            <person name="Sugawara M."/>
            <person name="Takahashi M."/>
            <person name="Kanda K."/>
            <person name="Yokoi T."/>
            <person name="Furuya T."/>
            <person name="Kikkawa E."/>
            <person name="Omura Y."/>
            <person name="Abe K."/>
            <person name="Kamihara K."/>
            <person name="Katsuta N."/>
            <person name="Sato K."/>
            <person name="Tanikawa M."/>
            <person name="Yamazaki M."/>
            <person name="Ninomiya K."/>
            <person name="Ishibashi T."/>
            <person name="Yamashita H."/>
            <person name="Murakawa K."/>
            <person name="Fujimori K."/>
            <person name="Tanai H."/>
            <person name="Kimata M."/>
            <person name="Watanabe M."/>
            <person name="Hiraoka S."/>
            <person name="Chiba Y."/>
            <person name="Ishida S."/>
            <person name="Ono Y."/>
            <person name="Takiguchi S."/>
            <person name="Watanabe S."/>
            <person name="Yosida M."/>
            <person name="Hotuta T."/>
            <person name="Kusano J."/>
            <person name="Kanehori K."/>
            <person name="Takahashi-Fujii A."/>
            <person name="Hara H."/>
            <person name="Tanase T.-O."/>
            <person name="Nomura Y."/>
            <person name="Togiya S."/>
            <person name="Komai F."/>
            <person name="Hara R."/>
            <person name="Takeuchi K."/>
            <person name="Arita M."/>
            <person name="Imose N."/>
            <person name="Musashino K."/>
            <person name="Yuuki H."/>
            <person name="Oshima A."/>
            <person name="Sasaki N."/>
            <person name="Aotsuka S."/>
            <person name="Yoshikawa Y."/>
            <person name="Matsunawa H."/>
            <person name="Ichihara T."/>
            <person name="Shiohata N."/>
            <person name="Sano S."/>
            <person name="Moriya S."/>
            <person name="Momiyama H."/>
            <person name="Satoh N."/>
            <person name="Takami S."/>
            <person name="Terashima Y."/>
            <person name="Suzuki O."/>
            <person name="Nakagawa S."/>
            <person name="Senoh A."/>
            <person name="Mizoguchi H."/>
            <person name="Goto Y."/>
            <person name="Shimizu F."/>
            <person name="Wakebe H."/>
            <person name="Hishigaki H."/>
            <person name="Watanabe T."/>
            <person name="Sugiyama A."/>
            <person name="Takemoto M."/>
            <person name="Kawakami B."/>
            <person name="Yamazaki M."/>
            <person name="Watanabe K."/>
            <person name="Kumagai A."/>
            <person name="Itakura S."/>
            <person name="Fukuzumi Y."/>
            <person name="Fujimori Y."/>
            <person name="Komiyama M."/>
            <person name="Tashiro H."/>
            <person name="Tanigami A."/>
            <person name="Fujiwara T."/>
            <person name="Ono T."/>
            <person name="Yamada K."/>
            <person name="Fujii Y."/>
            <person name="Ozaki K."/>
            <person name="Hirao M."/>
            <person name="Ohmori Y."/>
            <person name="Kawabata A."/>
            <person name="Hikiji T."/>
            <person name="Kobatake N."/>
            <person name="Inagaki H."/>
            <person name="Ikema Y."/>
            <person name="Okamoto S."/>
            <person name="Okitani R."/>
            <person name="Kawakami T."/>
            <person name="Noguchi S."/>
            <person name="Itoh T."/>
            <person name="Shigeta K."/>
            <person name="Senba T."/>
            <person name="Matsumura K."/>
            <person name="Nakajima Y."/>
            <person name="Mizuno T."/>
            <person name="Morinaga M."/>
            <person name="Sasaki M."/>
            <person name="Togashi T."/>
            <person name="Oyama M."/>
            <person name="Hata H."/>
            <person name="Watanabe M."/>
            <person name="Komatsu T."/>
            <person name="Mizushima-Sugano J."/>
            <person name="Satoh T."/>
            <person name="Shirai Y."/>
            <person name="Takahashi Y."/>
            <person name="Nakagawa K."/>
            <person name="Okumura K."/>
            <person name="Nagase T."/>
            <person name="Nomura N."/>
            <person name="Kikuchi H."/>
            <person name="Masuho Y."/>
            <person name="Yamashita R."/>
            <person name="Nakai K."/>
            <person name="Yada T."/>
            <person name="Nakamura Y."/>
            <person name="Ohara O."/>
            <person name="Isogai T."/>
            <person name="Sugano S."/>
        </authorList>
    </citation>
    <scope>NUCLEOTIDE SEQUENCE [LARGE SCALE MRNA] (ISOFORMS 1; 2 AND 3)</scope>
    <source>
        <tissue>Mesangial cell</tissue>
        <tissue>Testis</tissue>
    </source>
</reference>
<reference key="2">
    <citation type="journal article" date="2006" name="Nature">
        <title>The DNA sequence and biological annotation of human chromosome 1.</title>
        <authorList>
            <person name="Gregory S.G."/>
            <person name="Barlow K.F."/>
            <person name="McLay K.E."/>
            <person name="Kaul R."/>
            <person name="Swarbreck D."/>
            <person name="Dunham A."/>
            <person name="Scott C.E."/>
            <person name="Howe K.L."/>
            <person name="Woodfine K."/>
            <person name="Spencer C.C.A."/>
            <person name="Jones M.C."/>
            <person name="Gillson C."/>
            <person name="Searle S."/>
            <person name="Zhou Y."/>
            <person name="Kokocinski F."/>
            <person name="McDonald L."/>
            <person name="Evans R."/>
            <person name="Phillips K."/>
            <person name="Atkinson A."/>
            <person name="Cooper R."/>
            <person name="Jones C."/>
            <person name="Hall R.E."/>
            <person name="Andrews T.D."/>
            <person name="Lloyd C."/>
            <person name="Ainscough R."/>
            <person name="Almeida J.P."/>
            <person name="Ambrose K.D."/>
            <person name="Anderson F."/>
            <person name="Andrew R.W."/>
            <person name="Ashwell R.I.S."/>
            <person name="Aubin K."/>
            <person name="Babbage A.K."/>
            <person name="Bagguley C.L."/>
            <person name="Bailey J."/>
            <person name="Beasley H."/>
            <person name="Bethel G."/>
            <person name="Bird C.P."/>
            <person name="Bray-Allen S."/>
            <person name="Brown J.Y."/>
            <person name="Brown A.J."/>
            <person name="Buckley D."/>
            <person name="Burton J."/>
            <person name="Bye J."/>
            <person name="Carder C."/>
            <person name="Chapman J.C."/>
            <person name="Clark S.Y."/>
            <person name="Clarke G."/>
            <person name="Clee C."/>
            <person name="Cobley V."/>
            <person name="Collier R.E."/>
            <person name="Corby N."/>
            <person name="Coville G.J."/>
            <person name="Davies J."/>
            <person name="Deadman R."/>
            <person name="Dunn M."/>
            <person name="Earthrowl M."/>
            <person name="Ellington A.G."/>
            <person name="Errington H."/>
            <person name="Frankish A."/>
            <person name="Frankland J."/>
            <person name="French L."/>
            <person name="Garner P."/>
            <person name="Garnett J."/>
            <person name="Gay L."/>
            <person name="Ghori M.R.J."/>
            <person name="Gibson R."/>
            <person name="Gilby L.M."/>
            <person name="Gillett W."/>
            <person name="Glithero R.J."/>
            <person name="Grafham D.V."/>
            <person name="Griffiths C."/>
            <person name="Griffiths-Jones S."/>
            <person name="Grocock R."/>
            <person name="Hammond S."/>
            <person name="Harrison E.S.I."/>
            <person name="Hart E."/>
            <person name="Haugen E."/>
            <person name="Heath P.D."/>
            <person name="Holmes S."/>
            <person name="Holt K."/>
            <person name="Howden P.J."/>
            <person name="Hunt A.R."/>
            <person name="Hunt S.E."/>
            <person name="Hunter G."/>
            <person name="Isherwood J."/>
            <person name="James R."/>
            <person name="Johnson C."/>
            <person name="Johnson D."/>
            <person name="Joy A."/>
            <person name="Kay M."/>
            <person name="Kershaw J.K."/>
            <person name="Kibukawa M."/>
            <person name="Kimberley A.M."/>
            <person name="King A."/>
            <person name="Knights A.J."/>
            <person name="Lad H."/>
            <person name="Laird G."/>
            <person name="Lawlor S."/>
            <person name="Leongamornlert D.A."/>
            <person name="Lloyd D.M."/>
            <person name="Loveland J."/>
            <person name="Lovell J."/>
            <person name="Lush M.J."/>
            <person name="Lyne R."/>
            <person name="Martin S."/>
            <person name="Mashreghi-Mohammadi M."/>
            <person name="Matthews L."/>
            <person name="Matthews N.S.W."/>
            <person name="McLaren S."/>
            <person name="Milne S."/>
            <person name="Mistry S."/>
            <person name="Moore M.J.F."/>
            <person name="Nickerson T."/>
            <person name="O'Dell C.N."/>
            <person name="Oliver K."/>
            <person name="Palmeiri A."/>
            <person name="Palmer S.A."/>
            <person name="Parker A."/>
            <person name="Patel D."/>
            <person name="Pearce A.V."/>
            <person name="Peck A.I."/>
            <person name="Pelan S."/>
            <person name="Phelps K."/>
            <person name="Phillimore B.J."/>
            <person name="Plumb R."/>
            <person name="Rajan J."/>
            <person name="Raymond C."/>
            <person name="Rouse G."/>
            <person name="Saenphimmachak C."/>
            <person name="Sehra H.K."/>
            <person name="Sheridan E."/>
            <person name="Shownkeen R."/>
            <person name="Sims S."/>
            <person name="Skuce C.D."/>
            <person name="Smith M."/>
            <person name="Steward C."/>
            <person name="Subramanian S."/>
            <person name="Sycamore N."/>
            <person name="Tracey A."/>
            <person name="Tromans A."/>
            <person name="Van Helmond Z."/>
            <person name="Wall M."/>
            <person name="Wallis J.M."/>
            <person name="White S."/>
            <person name="Whitehead S.L."/>
            <person name="Wilkinson J.E."/>
            <person name="Willey D.L."/>
            <person name="Williams H."/>
            <person name="Wilming L."/>
            <person name="Wray P.W."/>
            <person name="Wu Z."/>
            <person name="Coulson A."/>
            <person name="Vaudin M."/>
            <person name="Sulston J.E."/>
            <person name="Durbin R.M."/>
            <person name="Hubbard T."/>
            <person name="Wooster R."/>
            <person name="Dunham I."/>
            <person name="Carter N.P."/>
            <person name="McVean G."/>
            <person name="Ross M.T."/>
            <person name="Harrow J."/>
            <person name="Olson M.V."/>
            <person name="Beck S."/>
            <person name="Rogers J."/>
            <person name="Bentley D.R."/>
        </authorList>
    </citation>
    <scope>NUCLEOTIDE SEQUENCE [LARGE SCALE GENOMIC DNA]</scope>
</reference>
<reference key="3">
    <citation type="submission" date="2005-07" db="EMBL/GenBank/DDBJ databases">
        <authorList>
            <person name="Mural R.J."/>
            <person name="Istrail S."/>
            <person name="Sutton G.G."/>
            <person name="Florea L."/>
            <person name="Halpern A.L."/>
            <person name="Mobarry C.M."/>
            <person name="Lippert R."/>
            <person name="Walenz B."/>
            <person name="Shatkay H."/>
            <person name="Dew I."/>
            <person name="Miller J.R."/>
            <person name="Flanigan M.J."/>
            <person name="Edwards N.J."/>
            <person name="Bolanos R."/>
            <person name="Fasulo D."/>
            <person name="Halldorsson B.V."/>
            <person name="Hannenhalli S."/>
            <person name="Turner R."/>
            <person name="Yooseph S."/>
            <person name="Lu F."/>
            <person name="Nusskern D.R."/>
            <person name="Shue B.C."/>
            <person name="Zheng X.H."/>
            <person name="Zhong F."/>
            <person name="Delcher A.L."/>
            <person name="Huson D.H."/>
            <person name="Kravitz S.A."/>
            <person name="Mouchard L."/>
            <person name="Reinert K."/>
            <person name="Remington K.A."/>
            <person name="Clark A.G."/>
            <person name="Waterman M.S."/>
            <person name="Eichler E.E."/>
            <person name="Adams M.D."/>
            <person name="Hunkapiller M.W."/>
            <person name="Myers E.W."/>
            <person name="Venter J.C."/>
        </authorList>
    </citation>
    <scope>NUCLEOTIDE SEQUENCE [LARGE SCALE GENOMIC DNA]</scope>
</reference>
<reference key="4">
    <citation type="journal article" date="2004" name="Genome Res.">
        <title>The status, quality, and expansion of the NIH full-length cDNA project: the Mammalian Gene Collection (MGC).</title>
        <authorList>
            <consortium name="The MGC Project Team"/>
        </authorList>
    </citation>
    <scope>NUCLEOTIDE SEQUENCE [LARGE SCALE MRNA] (ISOFORM 1)</scope>
    <source>
        <tissue>Testis</tissue>
    </source>
</reference>
<reference key="5">
    <citation type="journal article" date="2003" name="Nat. Biotechnol.">
        <title>Exploring proteomes and analyzing protein processing by mass spectrometric identification of sorted N-terminal peptides.</title>
        <authorList>
            <person name="Gevaert K."/>
            <person name="Goethals M."/>
            <person name="Martens L."/>
            <person name="Van Damme J."/>
            <person name="Staes A."/>
            <person name="Thomas G.R."/>
            <person name="Vandekerckhove J."/>
        </authorList>
    </citation>
    <scope>PROTEIN SEQUENCE OF 2-12</scope>
    <scope>ACETYLATION AT ALA-2</scope>
</reference>
<reference key="6">
    <citation type="journal article" date="2008" name="J. Proteome Res.">
        <title>Combining protein-based IMAC, peptide-based IMAC, and MudPIT for efficient phosphoproteomic analysis.</title>
        <authorList>
            <person name="Cantin G.T."/>
            <person name="Yi W."/>
            <person name="Lu B."/>
            <person name="Park S.K."/>
            <person name="Xu T."/>
            <person name="Lee J.-D."/>
            <person name="Yates J.R. III"/>
        </authorList>
    </citation>
    <scope>IDENTIFICATION BY MASS SPECTROMETRY [LARGE SCALE ANALYSIS]</scope>
    <source>
        <tissue>Cervix carcinoma</tissue>
    </source>
</reference>
<reference key="7">
    <citation type="journal article" date="2009" name="Sci. Signal.">
        <title>Quantitative phosphoproteomic analysis of T cell receptor signaling reveals system-wide modulation of protein-protein interactions.</title>
        <authorList>
            <person name="Mayya V."/>
            <person name="Lundgren D.H."/>
            <person name="Hwang S.-I."/>
            <person name="Rezaul K."/>
            <person name="Wu L."/>
            <person name="Eng J.K."/>
            <person name="Rodionov V."/>
            <person name="Han D.K."/>
        </authorList>
    </citation>
    <scope>PHOSPHORYLATION [LARGE SCALE ANALYSIS] AT SER-37</scope>
    <scope>IDENTIFICATION BY MASS SPECTROMETRY [LARGE SCALE ANALYSIS]</scope>
    <source>
        <tissue>Leukemic T-cell</tissue>
    </source>
</reference>
<reference key="8">
    <citation type="journal article" date="2012" name="J. Proteomics">
        <title>Systematic validation of antibody binding and protein subcellular localization using siRNA and confocal microscopy.</title>
        <authorList>
            <person name="Stadler C."/>
            <person name="Hjelmare M."/>
            <person name="Neumann B."/>
            <person name="Jonasson K."/>
            <person name="Pepperkok R."/>
            <person name="Uhlen M."/>
            <person name="Lundberg E."/>
        </authorList>
    </citation>
    <scope>SUBCELLULAR LOCATION</scope>
</reference>
<reference key="9">
    <citation type="journal article" date="2012" name="Proc. Natl. Acad. Sci. U.S.A.">
        <title>N-terminal acetylome analyses and functional insights of the N-terminal acetyltransferase NatB.</title>
        <authorList>
            <person name="Van Damme P."/>
            <person name="Lasa M."/>
            <person name="Polevoda B."/>
            <person name="Gazquez C."/>
            <person name="Elosegui-Artola A."/>
            <person name="Kim D.S."/>
            <person name="De Juan-Pardo E."/>
            <person name="Demeyer K."/>
            <person name="Hole K."/>
            <person name="Larrea E."/>
            <person name="Timmerman E."/>
            <person name="Prieto J."/>
            <person name="Arnesen T."/>
            <person name="Sherman F."/>
            <person name="Gevaert K."/>
            <person name="Aldabe R."/>
        </authorList>
    </citation>
    <scope>ACETYLATION [LARGE SCALE ANALYSIS] AT ALA-2</scope>
    <scope>CLEAVAGE OF INITIATOR METHIONINE [LARGE SCALE ANALYSIS]</scope>
    <scope>IDENTIFICATION BY MASS SPECTROMETRY [LARGE SCALE ANALYSIS]</scope>
</reference>
<reference key="10">
    <citation type="journal article" date="2013" name="J. Proteome Res.">
        <title>Toward a comprehensive characterization of a human cancer cell phosphoproteome.</title>
        <authorList>
            <person name="Zhou H."/>
            <person name="Di Palma S."/>
            <person name="Preisinger C."/>
            <person name="Peng M."/>
            <person name="Polat A.N."/>
            <person name="Heck A.J."/>
            <person name="Mohammed S."/>
        </authorList>
    </citation>
    <scope>PHOSPHORYLATION [LARGE SCALE ANALYSIS] AT SER-37 AND SER-175</scope>
    <scope>IDENTIFICATION BY MASS SPECTROMETRY [LARGE SCALE ANALYSIS]</scope>
    <source>
        <tissue>Cervix carcinoma</tissue>
        <tissue>Erythroleukemia</tissue>
    </source>
</reference>
<reference key="11">
    <citation type="journal article" date="2014" name="J. Proteomics">
        <title>An enzyme assisted RP-RPLC approach for in-depth analysis of human liver phosphoproteome.</title>
        <authorList>
            <person name="Bian Y."/>
            <person name="Song C."/>
            <person name="Cheng K."/>
            <person name="Dong M."/>
            <person name="Wang F."/>
            <person name="Huang J."/>
            <person name="Sun D."/>
            <person name="Wang L."/>
            <person name="Ye M."/>
            <person name="Zou H."/>
        </authorList>
    </citation>
    <scope>PHOSPHORYLATION [LARGE SCALE ANALYSIS] AT SER-175 AND SER-289</scope>
    <scope>IDENTIFICATION BY MASS SPECTROMETRY [LARGE SCALE ANALYSIS]</scope>
    <source>
        <tissue>Liver</tissue>
    </source>
</reference>
<organism>
    <name type="scientific">Homo sapiens</name>
    <name type="common">Human</name>
    <dbReference type="NCBI Taxonomy" id="9606"/>
    <lineage>
        <taxon>Eukaryota</taxon>
        <taxon>Metazoa</taxon>
        <taxon>Chordata</taxon>
        <taxon>Craniata</taxon>
        <taxon>Vertebrata</taxon>
        <taxon>Euteleostomi</taxon>
        <taxon>Mammalia</taxon>
        <taxon>Eutheria</taxon>
        <taxon>Euarchontoglires</taxon>
        <taxon>Primates</taxon>
        <taxon>Haplorrhini</taxon>
        <taxon>Catarrhini</taxon>
        <taxon>Hominidae</taxon>
        <taxon>Homo</taxon>
    </lineage>
</organism>
<proteinExistence type="evidence at protein level"/>
<dbReference type="EMBL" id="AK027431">
    <property type="protein sequence ID" value="BAB55105.1"/>
    <property type="molecule type" value="mRNA"/>
</dbReference>
<dbReference type="EMBL" id="AK096166">
    <property type="protein sequence ID" value="BAG53223.1"/>
    <property type="molecule type" value="mRNA"/>
</dbReference>
<dbReference type="EMBL" id="AK292433">
    <property type="protein sequence ID" value="BAF85122.1"/>
    <property type="molecule type" value="mRNA"/>
</dbReference>
<dbReference type="EMBL" id="AL118511">
    <property type="status" value="NOT_ANNOTATED_CDS"/>
    <property type="molecule type" value="Genomic_DNA"/>
</dbReference>
<dbReference type="EMBL" id="CH471098">
    <property type="protein sequence ID" value="EAW69926.1"/>
    <property type="molecule type" value="Genomic_DNA"/>
</dbReference>
<dbReference type="EMBL" id="BC066649">
    <property type="protein sequence ID" value="AAH66649.1"/>
    <property type="molecule type" value="mRNA"/>
</dbReference>
<dbReference type="CCDS" id="CCDS1587.1">
    <molecule id="Q9H425-1"/>
</dbReference>
<dbReference type="CCDS" id="CCDS44330.1">
    <molecule id="Q9H425-3"/>
</dbReference>
<dbReference type="CCDS" id="CCDS44331.1">
    <molecule id="Q9H425-2"/>
</dbReference>
<dbReference type="RefSeq" id="NP_001129966.1">
    <molecule id="Q9H425-3"/>
    <property type="nucleotide sequence ID" value="NM_001136494.2"/>
</dbReference>
<dbReference type="RefSeq" id="NP_001129967.1">
    <molecule id="Q9H425-2"/>
    <property type="nucleotide sequence ID" value="NM_001136495.2"/>
</dbReference>
<dbReference type="RefSeq" id="NP_116189.1">
    <molecule id="Q9H425-1"/>
    <property type="nucleotide sequence ID" value="NM_032800.3"/>
</dbReference>
<dbReference type="RefSeq" id="XP_016858088.1">
    <molecule id="Q9H425-2"/>
    <property type="nucleotide sequence ID" value="XM_017002599.3"/>
</dbReference>
<dbReference type="RefSeq" id="XP_047288460.1">
    <molecule id="Q9H425-2"/>
    <property type="nucleotide sequence ID" value="XM_047432504.1"/>
</dbReference>
<dbReference type="BioGRID" id="124327">
    <property type="interactions" value="96"/>
</dbReference>
<dbReference type="FunCoup" id="Q9H425">
    <property type="interactions" value="796"/>
</dbReference>
<dbReference type="IntAct" id="Q9H425">
    <property type="interactions" value="35"/>
</dbReference>
<dbReference type="MINT" id="Q9H425"/>
<dbReference type="STRING" id="9606.ENSP00000355623"/>
<dbReference type="GlyCosmos" id="Q9H425">
    <property type="glycosylation" value="1 site, 1 glycan"/>
</dbReference>
<dbReference type="GlyGen" id="Q9H425">
    <property type="glycosylation" value="2 sites, 1 O-linked glycan (2 sites)"/>
</dbReference>
<dbReference type="iPTMnet" id="Q9H425"/>
<dbReference type="PhosphoSitePlus" id="Q9H425"/>
<dbReference type="SwissPalm" id="Q9H425"/>
<dbReference type="BioMuta" id="C1orf198"/>
<dbReference type="DMDM" id="74752632"/>
<dbReference type="jPOST" id="Q9H425"/>
<dbReference type="MassIVE" id="Q9H425"/>
<dbReference type="PaxDb" id="9606-ENSP00000355623"/>
<dbReference type="PeptideAtlas" id="Q9H425"/>
<dbReference type="ProteomicsDB" id="1887"/>
<dbReference type="ProteomicsDB" id="34104"/>
<dbReference type="ProteomicsDB" id="80782">
    <molecule id="Q9H425-1"/>
</dbReference>
<dbReference type="Pumba" id="Q9H425"/>
<dbReference type="Antibodypedia" id="1577">
    <property type="antibodies" value="55 antibodies from 14 providers"/>
</dbReference>
<dbReference type="DNASU" id="84886"/>
<dbReference type="Ensembl" id="ENST00000366663.10">
    <molecule id="Q9H425-1"/>
    <property type="protein sequence ID" value="ENSP00000355623.5"/>
    <property type="gene ID" value="ENSG00000119280.17"/>
</dbReference>
<dbReference type="Ensembl" id="ENST00000470540.5">
    <molecule id="Q9H425-3"/>
    <property type="protein sequence ID" value="ENSP00000428172.1"/>
    <property type="gene ID" value="ENSG00000119280.17"/>
</dbReference>
<dbReference type="Ensembl" id="ENST00000523410.1">
    <molecule id="Q9H425-2"/>
    <property type="protein sequence ID" value="ENSP00000430967.1"/>
    <property type="gene ID" value="ENSG00000119280.17"/>
</dbReference>
<dbReference type="GeneID" id="84886"/>
<dbReference type="KEGG" id="hsa:84886"/>
<dbReference type="MANE-Select" id="ENST00000366663.10">
    <property type="protein sequence ID" value="ENSP00000355623.5"/>
    <property type="RefSeq nucleotide sequence ID" value="NM_032800.3"/>
    <property type="RefSeq protein sequence ID" value="NP_116189.1"/>
</dbReference>
<dbReference type="UCSC" id="uc001hub.4">
    <molecule id="Q9H425-1"/>
    <property type="organism name" value="human"/>
</dbReference>
<dbReference type="AGR" id="HGNC:25900"/>
<dbReference type="CTD" id="84886"/>
<dbReference type="DisGeNET" id="84886"/>
<dbReference type="GeneCards" id="C1orf198"/>
<dbReference type="HGNC" id="HGNC:25900">
    <property type="gene designation" value="C1orf198"/>
</dbReference>
<dbReference type="HPA" id="ENSG00000119280">
    <property type="expression patterns" value="Tissue enhanced (brain)"/>
</dbReference>
<dbReference type="neXtProt" id="NX_Q9H425"/>
<dbReference type="OpenTargets" id="ENSG00000119280"/>
<dbReference type="PharmGKB" id="PA143485319"/>
<dbReference type="VEuPathDB" id="HostDB:ENSG00000119280"/>
<dbReference type="eggNOG" id="ENOG502R926">
    <property type="taxonomic scope" value="Eukaryota"/>
</dbReference>
<dbReference type="GeneTree" id="ENSGT00390000018361"/>
<dbReference type="HOGENOM" id="CLU_069832_0_0_1"/>
<dbReference type="InParanoid" id="Q9H425"/>
<dbReference type="OMA" id="EQSEFHS"/>
<dbReference type="OrthoDB" id="5984457at2759"/>
<dbReference type="PAN-GO" id="Q9H425">
    <property type="GO annotations" value="0 GO annotations based on evolutionary models"/>
</dbReference>
<dbReference type="PhylomeDB" id="Q9H425"/>
<dbReference type="TreeFam" id="TF334642"/>
<dbReference type="PathwayCommons" id="Q9H425"/>
<dbReference type="SignaLink" id="Q9H425"/>
<dbReference type="BioGRID-ORCS" id="84886">
    <property type="hits" value="18 hits in 1159 CRISPR screens"/>
</dbReference>
<dbReference type="CD-CODE" id="FB4E32DD">
    <property type="entry name" value="Presynaptic clusters and postsynaptic densities"/>
</dbReference>
<dbReference type="ChiTaRS" id="C1orf198">
    <property type="organism name" value="human"/>
</dbReference>
<dbReference type="GenomeRNAi" id="84886"/>
<dbReference type="Pharos" id="Q9H425">
    <property type="development level" value="Tdark"/>
</dbReference>
<dbReference type="PRO" id="PR:Q9H425"/>
<dbReference type="Proteomes" id="UP000005640">
    <property type="component" value="Chromosome 1"/>
</dbReference>
<dbReference type="RNAct" id="Q9H425">
    <property type="molecule type" value="protein"/>
</dbReference>
<dbReference type="Bgee" id="ENSG00000119280">
    <property type="expression patterns" value="Expressed in cardiac muscle of right atrium and 187 other cell types or tissues"/>
</dbReference>
<dbReference type="ExpressionAtlas" id="Q9H425">
    <property type="expression patterns" value="baseline and differential"/>
</dbReference>
<dbReference type="GO" id="GO:0005829">
    <property type="term" value="C:cytosol"/>
    <property type="evidence" value="ECO:0000314"/>
    <property type="project" value="HPA"/>
</dbReference>
<dbReference type="InterPro" id="IPR031600">
    <property type="entry name" value="DUF4706"/>
</dbReference>
<dbReference type="PANTHER" id="PTHR34394">
    <property type="entry name" value="SIMILAR TO RIKEN CDNA 2310022B05"/>
    <property type="match status" value="1"/>
</dbReference>
<dbReference type="PANTHER" id="PTHR34394:SF1">
    <property type="entry name" value="SIMILAR TO RIKEN CDNA 2310022B05"/>
    <property type="match status" value="1"/>
</dbReference>
<dbReference type="Pfam" id="PF15797">
    <property type="entry name" value="DUF4706"/>
    <property type="match status" value="1"/>
</dbReference>
<protein>
    <recommendedName>
        <fullName>Uncharacterized protein C1orf198</fullName>
    </recommendedName>
</protein>
<keyword id="KW-0007">Acetylation</keyword>
<keyword id="KW-0025">Alternative splicing</keyword>
<keyword id="KW-0963">Cytoplasm</keyword>
<keyword id="KW-0903">Direct protein sequencing</keyword>
<keyword id="KW-0597">Phosphoprotein</keyword>
<keyword id="KW-1267">Proteomics identification</keyword>
<keyword id="KW-1185">Reference proteome</keyword>
<feature type="initiator methionine" description="Removed" evidence="3 8">
    <location>
        <position position="1"/>
    </location>
</feature>
<feature type="chain" id="PRO_0000280342" description="Uncharacterized protein C1orf198">
    <location>
        <begin position="2"/>
        <end position="327"/>
    </location>
</feature>
<feature type="region of interest" description="Disordered" evidence="2">
    <location>
        <begin position="1"/>
        <end position="22"/>
    </location>
</feature>
<feature type="region of interest" description="Disordered" evidence="2">
    <location>
        <begin position="76"/>
        <end position="113"/>
    </location>
</feature>
<feature type="region of interest" description="Disordered" evidence="2">
    <location>
        <begin position="134"/>
        <end position="299"/>
    </location>
</feature>
<feature type="compositionally biased region" description="Low complexity" evidence="2">
    <location>
        <begin position="1"/>
        <end position="17"/>
    </location>
</feature>
<feature type="compositionally biased region" description="Polar residues" evidence="2">
    <location>
        <begin position="134"/>
        <end position="148"/>
    </location>
</feature>
<feature type="compositionally biased region" description="Low complexity" evidence="2">
    <location>
        <begin position="162"/>
        <end position="176"/>
    </location>
</feature>
<feature type="compositionally biased region" description="Basic and acidic residues" evidence="2">
    <location>
        <begin position="182"/>
        <end position="202"/>
    </location>
</feature>
<feature type="compositionally biased region" description="Basic and acidic residues" evidence="2">
    <location>
        <begin position="233"/>
        <end position="252"/>
    </location>
</feature>
<feature type="modified residue" description="N-acetylalanine" evidence="3 8">
    <location>
        <position position="2"/>
    </location>
</feature>
<feature type="modified residue" description="Phosphoserine" evidence="7 9">
    <location>
        <position position="37"/>
    </location>
</feature>
<feature type="modified residue" description="Phosphoserine" evidence="1">
    <location>
        <position position="129"/>
    </location>
</feature>
<feature type="modified residue" description="Phosphoserine" evidence="9 10">
    <location>
        <position position="175"/>
    </location>
</feature>
<feature type="modified residue" description="Phosphoserine" evidence="10">
    <location>
        <position position="289"/>
    </location>
</feature>
<feature type="splice variant" id="VSP_044252" description="In isoform 2." evidence="5">
    <location>
        <begin position="1"/>
        <end position="130"/>
    </location>
</feature>
<feature type="splice variant" id="VSP_046926" description="In isoform 3." evidence="5">
    <location>
        <begin position="1"/>
        <end position="38"/>
    </location>
</feature>
<feature type="sequence variant" id="VAR_050707" description="In dbSNP:rs34864456.">
    <original>A</original>
    <variation>S</variation>
    <location>
        <position position="274"/>
    </location>
</feature>
<feature type="sequence variant" id="VAR_050708" description="In dbSNP:rs35115679.">
    <original>K</original>
    <variation>R</variation>
    <location>
        <position position="306"/>
    </location>
</feature>
<feature type="sequence conflict" description="In Ref. 1; BAG53223." evidence="6" ref="1">
    <original>Q</original>
    <variation>L</variation>
    <location>
        <position position="163"/>
    </location>
</feature>
<sequence>MASMAAAIAASRSAVMSGNRPLDDRERKRFTYFSSLSPMARKIMQDKEKIREKYGPEWARLPPAQQDEIIDRCLVGPRAPAPRDPGDSEELTRFPGLRGPTGQKVVRFGDEDLTWQDEHSAPFSWETKSQMEFSISALSIQEPSNGTAASEPRPLSKASQGSQALKSSQGSRSSSLDALGPTRKEEEASFWKINAERSRGEGPEAEFQSLTPSQIKSMEKGEKVLPPCYRQEPAPKDREAKVERPSTLRQEQRPLPNVSTERERPQPVQAFSSALHEAAPSQLEGKLPSPDVRQDDGEDTLFSEPKFAQVSSSNVVLKTGFDFLDNW</sequence>
<comment type="subcellular location">
    <subcellularLocation>
        <location evidence="4">Cytoplasm</location>
    </subcellularLocation>
</comment>
<comment type="alternative products">
    <event type="alternative splicing"/>
    <isoform>
        <id>Q9H425-1</id>
        <name>1</name>
        <sequence type="displayed"/>
    </isoform>
    <isoform>
        <id>Q9H425-2</id>
        <name>2</name>
        <sequence type="described" ref="VSP_044252"/>
    </isoform>
    <isoform>
        <id>Q9H425-3</id>
        <name>3</name>
        <sequence type="described" ref="VSP_046926"/>
    </isoform>
</comment>
<name>CA198_HUMAN</name>
<accession>Q9H425</accession>
<accession>A8K8R8</accession>
<accession>B3KTW1</accession>
<accession>G5EA08</accession>
<evidence type="ECO:0000250" key="1">
    <source>
        <dbReference type="UniProtKB" id="Q8C3W1"/>
    </source>
</evidence>
<evidence type="ECO:0000256" key="2">
    <source>
        <dbReference type="SAM" id="MobiDB-lite"/>
    </source>
</evidence>
<evidence type="ECO:0000269" key="3">
    <source>
    </source>
</evidence>
<evidence type="ECO:0000269" key="4">
    <source>
    </source>
</evidence>
<evidence type="ECO:0000303" key="5">
    <source>
    </source>
</evidence>
<evidence type="ECO:0000305" key="6"/>
<evidence type="ECO:0007744" key="7">
    <source>
    </source>
</evidence>
<evidence type="ECO:0007744" key="8">
    <source>
    </source>
</evidence>
<evidence type="ECO:0007744" key="9">
    <source>
    </source>
</evidence>
<evidence type="ECO:0007744" key="10">
    <source>
    </source>
</evidence>
<gene>
    <name type="primary">C1orf198</name>
</gene>